<gene>
    <name evidence="4" type="primary">AUG5</name>
    <name evidence="6" type="ordered locus">At5g38880</name>
    <name evidence="7" type="ORF">K15E6.9</name>
</gene>
<dbReference type="EMBL" id="AB009048">
    <property type="protein sequence ID" value="BAB08644.1"/>
    <property type="molecule type" value="Genomic_DNA"/>
</dbReference>
<dbReference type="EMBL" id="CP002688">
    <property type="protein sequence ID" value="AED94368.1"/>
    <property type="molecule type" value="Genomic_DNA"/>
</dbReference>
<dbReference type="EMBL" id="AK227777">
    <property type="protein sequence ID" value="BAE99759.1"/>
    <property type="molecule type" value="mRNA"/>
</dbReference>
<dbReference type="EMBL" id="AK220756">
    <property type="protein sequence ID" value="BAD93943.1"/>
    <property type="status" value="ALT_INIT"/>
    <property type="molecule type" value="mRNA"/>
</dbReference>
<dbReference type="EMBL" id="BT009661">
    <property type="protein sequence ID" value="AAP78929.1"/>
    <property type="molecule type" value="mRNA"/>
</dbReference>
<dbReference type="RefSeq" id="NP_198704.2">
    <property type="nucleotide sequence ID" value="NM_123249.3"/>
</dbReference>
<dbReference type="SMR" id="Q9FMB4"/>
<dbReference type="FunCoup" id="Q9FMB4">
    <property type="interactions" value="1547"/>
</dbReference>
<dbReference type="STRING" id="3702.Q9FMB4"/>
<dbReference type="GlyGen" id="Q9FMB4">
    <property type="glycosylation" value="1 site"/>
</dbReference>
<dbReference type="iPTMnet" id="Q9FMB4"/>
<dbReference type="PaxDb" id="3702-AT5G38880.1"/>
<dbReference type="ProteomicsDB" id="240915"/>
<dbReference type="EnsemblPlants" id="AT5G38880.1">
    <property type="protein sequence ID" value="AT5G38880.1"/>
    <property type="gene ID" value="AT5G38880"/>
</dbReference>
<dbReference type="GeneID" id="833879"/>
<dbReference type="Gramene" id="AT5G38880.1">
    <property type="protein sequence ID" value="AT5G38880.1"/>
    <property type="gene ID" value="AT5G38880"/>
</dbReference>
<dbReference type="KEGG" id="ath:AT5G38880"/>
<dbReference type="Araport" id="AT5G38880"/>
<dbReference type="TAIR" id="AT5G38880">
    <property type="gene designation" value="AUG5"/>
</dbReference>
<dbReference type="eggNOG" id="ENOG502QRA2">
    <property type="taxonomic scope" value="Eukaryota"/>
</dbReference>
<dbReference type="HOGENOM" id="CLU_019917_0_0_1"/>
<dbReference type="InParanoid" id="Q9FMB4"/>
<dbReference type="OMA" id="YEGNGIC"/>
<dbReference type="PhylomeDB" id="Q9FMB4"/>
<dbReference type="PRO" id="PR:Q9FMB4"/>
<dbReference type="Proteomes" id="UP000006548">
    <property type="component" value="Chromosome 5"/>
</dbReference>
<dbReference type="ExpressionAtlas" id="Q9FMB4">
    <property type="expression patterns" value="baseline and differential"/>
</dbReference>
<dbReference type="GO" id="GO:0070652">
    <property type="term" value="C:HAUS complex"/>
    <property type="evidence" value="ECO:0007669"/>
    <property type="project" value="InterPro"/>
</dbReference>
<dbReference type="GO" id="GO:0009524">
    <property type="term" value="C:phragmoplast"/>
    <property type="evidence" value="ECO:0007669"/>
    <property type="project" value="UniProtKB-SubCell"/>
</dbReference>
<dbReference type="GO" id="GO:0005876">
    <property type="term" value="C:spindle microtubule"/>
    <property type="evidence" value="ECO:0000314"/>
    <property type="project" value="TAIR"/>
</dbReference>
<dbReference type="GO" id="GO:0051011">
    <property type="term" value="F:microtubule minus-end binding"/>
    <property type="evidence" value="ECO:0000314"/>
    <property type="project" value="TAIR"/>
</dbReference>
<dbReference type="GO" id="GO:0051301">
    <property type="term" value="P:cell division"/>
    <property type="evidence" value="ECO:0007669"/>
    <property type="project" value="UniProtKB-KW"/>
</dbReference>
<dbReference type="GO" id="GO:0051225">
    <property type="term" value="P:spindle assembly"/>
    <property type="evidence" value="ECO:0007669"/>
    <property type="project" value="InterPro"/>
</dbReference>
<dbReference type="InterPro" id="IPR044706">
    <property type="entry name" value="AUG5_plant"/>
</dbReference>
<dbReference type="InterPro" id="IPR029131">
    <property type="entry name" value="HAUS5"/>
</dbReference>
<dbReference type="PANTHER" id="PTHR34968">
    <property type="entry name" value="AUGMIN SUBUNIT 5"/>
    <property type="match status" value="1"/>
</dbReference>
<dbReference type="PANTHER" id="PTHR34968:SF1">
    <property type="entry name" value="AUGMIN SUBUNIT 5"/>
    <property type="match status" value="1"/>
</dbReference>
<dbReference type="Pfam" id="PF14817">
    <property type="entry name" value="HAUS5"/>
    <property type="match status" value="1"/>
</dbReference>
<evidence type="ECO:0000255" key="1"/>
<evidence type="ECO:0000256" key="2">
    <source>
        <dbReference type="SAM" id="MobiDB-lite"/>
    </source>
</evidence>
<evidence type="ECO:0000269" key="3">
    <source>
    </source>
</evidence>
<evidence type="ECO:0000303" key="4">
    <source>
    </source>
</evidence>
<evidence type="ECO:0000305" key="5"/>
<evidence type="ECO:0000312" key="6">
    <source>
        <dbReference type="Araport" id="AT5G38880"/>
    </source>
</evidence>
<evidence type="ECO:0000312" key="7">
    <source>
        <dbReference type="EMBL" id="BAB08644.1"/>
    </source>
</evidence>
<evidence type="ECO:0000312" key="8">
    <source>
        <dbReference type="Proteomes" id="UP000006548"/>
    </source>
</evidence>
<organism evidence="8">
    <name type="scientific">Arabidopsis thaliana</name>
    <name type="common">Mouse-ear cress</name>
    <dbReference type="NCBI Taxonomy" id="3702"/>
    <lineage>
        <taxon>Eukaryota</taxon>
        <taxon>Viridiplantae</taxon>
        <taxon>Streptophyta</taxon>
        <taxon>Embryophyta</taxon>
        <taxon>Tracheophyta</taxon>
        <taxon>Spermatophyta</taxon>
        <taxon>Magnoliopsida</taxon>
        <taxon>eudicotyledons</taxon>
        <taxon>Gunneridae</taxon>
        <taxon>Pentapetalae</taxon>
        <taxon>rosids</taxon>
        <taxon>malvids</taxon>
        <taxon>Brassicales</taxon>
        <taxon>Brassicaceae</taxon>
        <taxon>Camelineae</taxon>
        <taxon>Arabidopsis</taxon>
    </lineage>
</organism>
<sequence length="796" mass="89181">MQSLSSSAPTPEAILEWLQKEMGYRQLGPYNGSSKSHVPSIDAIRKICRGNMIPIWNFLINRVKSEKTVERIRRNITVHGGSSNASIGSSVNPGKEESKSKGRRKDKTVTGESSSYAEDREAALQERELAAKEVERLRNIVRRQRKDLKARMLEVSREEAERKRMLDERANYRHKQALLEAYDQQCDEATRIFAEYHKRLQVYVNQANDAQRSVNSSNEVLSSLSANSEREAVYSTVKGTKSADDVILMETTRERNIRIVCDLLASRMIERIRNSFPAYEGNGICSLPELETAKLGFEYDGEITDEMKTVIVNSLRGPPLLLQAIAAYTLRIKTLISREMEKIDVRADAEMLRYKFENNRVTDNSSSDVSSPLSYQFNGNGKIGTDTHFQGSNNQLLERQKAHVQQFLATEDALNKAAEARDLCHKFINRLHGSADTATHSFVGGTTQSGSNLRQFELDVWGKEREAAGLRASLNTLLSEIQRLNKLCAERKEAEDSLKKKWKKIEEFDARRSELETIYTTLLKANMDAVAFWNQQPLAAREYASATVIPASEVVVDISNSAKDFIEKEVSAFFQSPDNSLYMLPATPQGLLESMGANGSTGPEAVAYAEKNAALLTARAGARDPSAIPSICRISAALQYPAGLEGSDASLASVLESLEFCLRVRGSEACVLEDLAKAIDLVHIRQDLVESGHSLLDHAFRAQQKYERTTNYCLDLASEQENTISDQWLPELRTAVQNAQASSEHCKYVRGLLDEWWEQPASTVVDWVTVDGQSVAAWQNHVKQLLAFYDKESLRT</sequence>
<keyword id="KW-0131">Cell cycle</keyword>
<keyword id="KW-0132">Cell division</keyword>
<keyword id="KW-0175">Coiled coil</keyword>
<keyword id="KW-0963">Cytoplasm</keyword>
<keyword id="KW-0206">Cytoskeleton</keyword>
<keyword id="KW-0493">Microtubule</keyword>
<keyword id="KW-0498">Mitosis</keyword>
<keyword id="KW-1185">Reference proteome</keyword>
<reference key="1">
    <citation type="journal article" date="1998" name="DNA Res.">
        <title>Structural analysis of Arabidopsis thaliana chromosome 5. IV. Sequence features of the regions of 1,456,315 bp covered by nineteen physically assigned P1 and TAC clones.</title>
        <authorList>
            <person name="Sato S."/>
            <person name="Kaneko T."/>
            <person name="Kotani H."/>
            <person name="Nakamura Y."/>
            <person name="Asamizu E."/>
            <person name="Miyajima N."/>
            <person name="Tabata S."/>
        </authorList>
    </citation>
    <scope>NUCLEOTIDE SEQUENCE [LARGE SCALE GENOMIC DNA]</scope>
    <source>
        <strain>cv. Columbia</strain>
    </source>
</reference>
<reference key="2">
    <citation type="journal article" date="2017" name="Plant J.">
        <title>Araport11: a complete reannotation of the Arabidopsis thaliana reference genome.</title>
        <authorList>
            <person name="Cheng C.Y."/>
            <person name="Krishnakumar V."/>
            <person name="Chan A.P."/>
            <person name="Thibaud-Nissen F."/>
            <person name="Schobel S."/>
            <person name="Town C.D."/>
        </authorList>
    </citation>
    <scope>GENOME REANNOTATION</scope>
    <source>
        <strain>cv. Columbia</strain>
    </source>
</reference>
<reference key="3">
    <citation type="submission" date="2006-07" db="EMBL/GenBank/DDBJ databases">
        <title>Large-scale analysis of RIKEN Arabidopsis full-length (RAFL) cDNAs.</title>
        <authorList>
            <person name="Totoki Y."/>
            <person name="Seki M."/>
            <person name="Ishida J."/>
            <person name="Nakajima M."/>
            <person name="Enju A."/>
            <person name="Kamiya A."/>
            <person name="Narusaka M."/>
            <person name="Shin-i T."/>
            <person name="Nakagawa M."/>
            <person name="Sakamoto N."/>
            <person name="Oishi K."/>
            <person name="Kohara Y."/>
            <person name="Kobayashi M."/>
            <person name="Toyoda A."/>
            <person name="Sakaki Y."/>
            <person name="Sakurai T."/>
            <person name="Iida K."/>
            <person name="Akiyama K."/>
            <person name="Satou M."/>
            <person name="Toyoda T."/>
            <person name="Konagaya A."/>
            <person name="Carninci P."/>
            <person name="Kawai J."/>
            <person name="Hayashizaki Y."/>
            <person name="Shinozaki K."/>
        </authorList>
    </citation>
    <scope>NUCLEOTIDE SEQUENCE [LARGE SCALE MRNA]</scope>
    <source>
        <strain>cv. Columbia</strain>
    </source>
</reference>
<reference key="4">
    <citation type="journal article" date="2003" name="Science">
        <title>Empirical analysis of transcriptional activity in the Arabidopsis genome.</title>
        <authorList>
            <person name="Yamada K."/>
            <person name="Lim J."/>
            <person name="Dale J.M."/>
            <person name="Chen H."/>
            <person name="Shinn P."/>
            <person name="Palm C.J."/>
            <person name="Southwick A.M."/>
            <person name="Wu H.C."/>
            <person name="Kim C.J."/>
            <person name="Nguyen M."/>
            <person name="Pham P.K."/>
            <person name="Cheuk R.F."/>
            <person name="Karlin-Newmann G."/>
            <person name="Liu S.X."/>
            <person name="Lam B."/>
            <person name="Sakano H."/>
            <person name="Wu T."/>
            <person name="Yu G."/>
            <person name="Miranda M."/>
            <person name="Quach H.L."/>
            <person name="Tripp M."/>
            <person name="Chang C.H."/>
            <person name="Lee J.M."/>
            <person name="Toriumi M.J."/>
            <person name="Chan M.M."/>
            <person name="Tang C.C."/>
            <person name="Onodera C.S."/>
            <person name="Deng J.M."/>
            <person name="Akiyama K."/>
            <person name="Ansari Y."/>
            <person name="Arakawa T."/>
            <person name="Banh J."/>
            <person name="Banno F."/>
            <person name="Bowser L."/>
            <person name="Brooks S.Y."/>
            <person name="Carninci P."/>
            <person name="Chao Q."/>
            <person name="Choy N."/>
            <person name="Enju A."/>
            <person name="Goldsmith A.D."/>
            <person name="Gurjal M."/>
            <person name="Hansen N.F."/>
            <person name="Hayashizaki Y."/>
            <person name="Johnson-Hopson C."/>
            <person name="Hsuan V.W."/>
            <person name="Iida K."/>
            <person name="Karnes M."/>
            <person name="Khan S."/>
            <person name="Koesema E."/>
            <person name="Ishida J."/>
            <person name="Jiang P.X."/>
            <person name="Jones T."/>
            <person name="Kawai J."/>
            <person name="Kamiya A."/>
            <person name="Meyers C."/>
            <person name="Nakajima M."/>
            <person name="Narusaka M."/>
            <person name="Seki M."/>
            <person name="Sakurai T."/>
            <person name="Satou M."/>
            <person name="Tamse R."/>
            <person name="Vaysberg M."/>
            <person name="Wallender E.K."/>
            <person name="Wong C."/>
            <person name="Yamamura Y."/>
            <person name="Yuan S."/>
            <person name="Shinozaki K."/>
            <person name="Davis R.W."/>
            <person name="Theologis A."/>
            <person name="Ecker J.R."/>
        </authorList>
    </citation>
    <scope>NUCLEOTIDE SEQUENCE [LARGE SCALE MRNA] OF 22-796</scope>
    <source>
        <strain>cv. Columbia</strain>
    </source>
</reference>
<reference key="5">
    <citation type="journal article" date="2012" name="Plant Cell">
        <title>Characterization of the Arabidopsis augmin complex uncovers its critical function in the assembly of the acentrosomal spindle and phragmoplast microtubule arrays.</title>
        <authorList>
            <person name="Hotta T."/>
            <person name="Kong Z."/>
            <person name="Ho C.M."/>
            <person name="Zeng C.J."/>
            <person name="Horio T."/>
            <person name="Fong S."/>
            <person name="Vuong T."/>
            <person name="Lee Y.R."/>
            <person name="Liu B."/>
        </authorList>
    </citation>
    <scope>FUNCTION</scope>
    <scope>IDENTIFICATION IN THE AUGMIN COMPLEX BY MASS SPECTROMETRY</scope>
    <scope>DISRUPTION PHENOTYPE</scope>
    <scope>SUBCELLULAR LOCATION</scope>
</reference>
<feature type="chain" id="PRO_0000434096" description="AUGMIN subunit 5">
    <location>
        <begin position="1"/>
        <end position="796"/>
    </location>
</feature>
<feature type="region of interest" description="Disordered" evidence="2">
    <location>
        <begin position="79"/>
        <end position="120"/>
    </location>
</feature>
<feature type="coiled-coil region" evidence="1">
    <location>
        <begin position="115"/>
        <end position="191"/>
    </location>
</feature>
<feature type="coiled-coil region" evidence="1">
    <location>
        <begin position="462"/>
        <end position="501"/>
    </location>
</feature>
<feature type="compositionally biased region" description="Polar residues" evidence="2">
    <location>
        <begin position="80"/>
        <end position="92"/>
    </location>
</feature>
<accession>Q9FMB4</accession>
<accession>Q570F2</accession>
<accession>Q7XYR0</accession>
<comment type="function">
    <text evidence="3">Involved in microtubules reorganization during spindle and phragmoplast development.</text>
</comment>
<comment type="subunit">
    <text evidence="3">Part of the augmin complex composed of 8 subunits. The complex acts on microtubules and interacts with gamma-tubulin in spindles and the phragmoplast.</text>
</comment>
<comment type="subcellular location">
    <subcellularLocation>
        <location evidence="3">Cytoplasm</location>
        <location evidence="3">Cytoskeleton</location>
        <location evidence="3">Spindle</location>
    </subcellularLocation>
    <subcellularLocation>
        <location evidence="3">Cytoplasm</location>
        <location evidence="3">Cytoskeleton</location>
        <location evidence="3">Phragmoplast</location>
    </subcellularLocation>
    <text evidence="3">Preferentially localizes to microtubules minus ends.</text>
</comment>
<comment type="disruption phenotype">
    <text evidence="3">Lethal when homozygous.</text>
</comment>
<comment type="similarity">
    <text evidence="5">Belongs to the HAUS5 family.</text>
</comment>
<comment type="sequence caution" evidence="5">
    <conflict type="erroneous initiation">
        <sequence resource="EMBL-CDS" id="BAD93943"/>
    </conflict>
    <text>Truncated N-terminus.</text>
</comment>
<name>AUG5_ARATH</name>
<proteinExistence type="evidence at protein level"/>
<protein>
    <recommendedName>
        <fullName evidence="4">AUGMIN subunit 5</fullName>
    </recommendedName>
</protein>